<evidence type="ECO:0000255" key="1">
    <source>
        <dbReference type="HAMAP-Rule" id="MF_00144"/>
    </source>
</evidence>
<feature type="chain" id="PRO_1000076571" description="tRNA-specific 2-thiouridylase MnmA">
    <location>
        <begin position="1"/>
        <end position="372"/>
    </location>
</feature>
<feature type="region of interest" description="Interaction with target base in tRNA" evidence="1">
    <location>
        <begin position="103"/>
        <end position="105"/>
    </location>
</feature>
<feature type="region of interest" description="Interaction with tRNA" evidence="1">
    <location>
        <begin position="155"/>
        <end position="157"/>
    </location>
</feature>
<feature type="region of interest" description="Interaction with tRNA" evidence="1">
    <location>
        <begin position="317"/>
        <end position="318"/>
    </location>
</feature>
<feature type="active site" description="Nucleophile" evidence="1">
    <location>
        <position position="108"/>
    </location>
</feature>
<feature type="active site" description="Cysteine persulfide intermediate" evidence="1">
    <location>
        <position position="205"/>
    </location>
</feature>
<feature type="binding site" evidence="1">
    <location>
        <begin position="17"/>
        <end position="24"/>
    </location>
    <ligand>
        <name>ATP</name>
        <dbReference type="ChEBI" id="CHEBI:30616"/>
    </ligand>
</feature>
<feature type="binding site" evidence="1">
    <location>
        <position position="43"/>
    </location>
    <ligand>
        <name>ATP</name>
        <dbReference type="ChEBI" id="CHEBI:30616"/>
    </ligand>
</feature>
<feature type="binding site" evidence="1">
    <location>
        <position position="133"/>
    </location>
    <ligand>
        <name>ATP</name>
        <dbReference type="ChEBI" id="CHEBI:30616"/>
    </ligand>
</feature>
<feature type="site" description="Interaction with tRNA" evidence="1">
    <location>
        <position position="134"/>
    </location>
</feature>
<feature type="site" description="Interaction with tRNA" evidence="1">
    <location>
        <position position="350"/>
    </location>
</feature>
<feature type="disulfide bond" description="Alternate" evidence="1">
    <location>
        <begin position="108"/>
        <end position="205"/>
    </location>
</feature>
<protein>
    <recommendedName>
        <fullName evidence="1">tRNA-specific 2-thiouridylase MnmA</fullName>
        <ecNumber evidence="1">2.8.1.13</ecNumber>
    </recommendedName>
</protein>
<gene>
    <name evidence="1" type="primary">mnmA</name>
    <name type="synonym">trmU</name>
    <name type="ordered locus">Ssed_1881</name>
</gene>
<comment type="function">
    <text evidence="1">Catalyzes the 2-thiolation of uridine at the wobble position (U34) of tRNA, leading to the formation of s(2)U34.</text>
</comment>
<comment type="catalytic activity">
    <reaction evidence="1">
        <text>S-sulfanyl-L-cysteinyl-[protein] + uridine(34) in tRNA + AH2 + ATP = 2-thiouridine(34) in tRNA + L-cysteinyl-[protein] + A + AMP + diphosphate + H(+)</text>
        <dbReference type="Rhea" id="RHEA:47032"/>
        <dbReference type="Rhea" id="RHEA-COMP:10131"/>
        <dbReference type="Rhea" id="RHEA-COMP:11726"/>
        <dbReference type="Rhea" id="RHEA-COMP:11727"/>
        <dbReference type="Rhea" id="RHEA-COMP:11728"/>
        <dbReference type="ChEBI" id="CHEBI:13193"/>
        <dbReference type="ChEBI" id="CHEBI:15378"/>
        <dbReference type="ChEBI" id="CHEBI:17499"/>
        <dbReference type="ChEBI" id="CHEBI:29950"/>
        <dbReference type="ChEBI" id="CHEBI:30616"/>
        <dbReference type="ChEBI" id="CHEBI:33019"/>
        <dbReference type="ChEBI" id="CHEBI:61963"/>
        <dbReference type="ChEBI" id="CHEBI:65315"/>
        <dbReference type="ChEBI" id="CHEBI:87170"/>
        <dbReference type="ChEBI" id="CHEBI:456215"/>
        <dbReference type="EC" id="2.8.1.13"/>
    </reaction>
</comment>
<comment type="subcellular location">
    <subcellularLocation>
        <location evidence="1">Cytoplasm</location>
    </subcellularLocation>
</comment>
<comment type="similarity">
    <text evidence="1">Belongs to the MnmA/TRMU family.</text>
</comment>
<reference key="1">
    <citation type="submission" date="2007-08" db="EMBL/GenBank/DDBJ databases">
        <title>Complete sequence of Shewanella sediminis HAW-EB3.</title>
        <authorList>
            <consortium name="US DOE Joint Genome Institute"/>
            <person name="Copeland A."/>
            <person name="Lucas S."/>
            <person name="Lapidus A."/>
            <person name="Barry K."/>
            <person name="Glavina del Rio T."/>
            <person name="Dalin E."/>
            <person name="Tice H."/>
            <person name="Pitluck S."/>
            <person name="Chertkov O."/>
            <person name="Brettin T."/>
            <person name="Bruce D."/>
            <person name="Detter J.C."/>
            <person name="Han C."/>
            <person name="Schmutz J."/>
            <person name="Larimer F."/>
            <person name="Land M."/>
            <person name="Hauser L."/>
            <person name="Kyrpides N."/>
            <person name="Kim E."/>
            <person name="Zhao J.-S."/>
            <person name="Richardson P."/>
        </authorList>
    </citation>
    <scope>NUCLEOTIDE SEQUENCE [LARGE SCALE GENOMIC DNA]</scope>
    <source>
        <strain>HAW-EB3</strain>
    </source>
</reference>
<dbReference type="EC" id="2.8.1.13" evidence="1"/>
<dbReference type="EMBL" id="CP000821">
    <property type="protein sequence ID" value="ABV36492.1"/>
    <property type="molecule type" value="Genomic_DNA"/>
</dbReference>
<dbReference type="RefSeq" id="WP_012142228.1">
    <property type="nucleotide sequence ID" value="NC_009831.1"/>
</dbReference>
<dbReference type="SMR" id="A8FUG9"/>
<dbReference type="STRING" id="425104.Ssed_1881"/>
<dbReference type="KEGG" id="sse:Ssed_1881"/>
<dbReference type="eggNOG" id="COG0482">
    <property type="taxonomic scope" value="Bacteria"/>
</dbReference>
<dbReference type="HOGENOM" id="CLU_035188_1_0_6"/>
<dbReference type="OrthoDB" id="9800696at2"/>
<dbReference type="Proteomes" id="UP000002015">
    <property type="component" value="Chromosome"/>
</dbReference>
<dbReference type="GO" id="GO:0005737">
    <property type="term" value="C:cytoplasm"/>
    <property type="evidence" value="ECO:0007669"/>
    <property type="project" value="UniProtKB-SubCell"/>
</dbReference>
<dbReference type="GO" id="GO:0005524">
    <property type="term" value="F:ATP binding"/>
    <property type="evidence" value="ECO:0007669"/>
    <property type="project" value="UniProtKB-KW"/>
</dbReference>
<dbReference type="GO" id="GO:0000049">
    <property type="term" value="F:tRNA binding"/>
    <property type="evidence" value="ECO:0007669"/>
    <property type="project" value="UniProtKB-KW"/>
</dbReference>
<dbReference type="GO" id="GO:0103016">
    <property type="term" value="F:tRNA-uridine 2-sulfurtransferase activity"/>
    <property type="evidence" value="ECO:0007669"/>
    <property type="project" value="UniProtKB-EC"/>
</dbReference>
<dbReference type="GO" id="GO:0002143">
    <property type="term" value="P:tRNA wobble position uridine thiolation"/>
    <property type="evidence" value="ECO:0007669"/>
    <property type="project" value="TreeGrafter"/>
</dbReference>
<dbReference type="CDD" id="cd01998">
    <property type="entry name" value="MnmA_TRMU-like"/>
    <property type="match status" value="1"/>
</dbReference>
<dbReference type="FunFam" id="2.30.30.280:FF:000001">
    <property type="entry name" value="tRNA-specific 2-thiouridylase MnmA"/>
    <property type="match status" value="1"/>
</dbReference>
<dbReference type="FunFam" id="2.40.30.10:FF:000023">
    <property type="entry name" value="tRNA-specific 2-thiouridylase MnmA"/>
    <property type="match status" value="1"/>
</dbReference>
<dbReference type="FunFam" id="3.40.50.620:FF:000004">
    <property type="entry name" value="tRNA-specific 2-thiouridylase MnmA"/>
    <property type="match status" value="1"/>
</dbReference>
<dbReference type="Gene3D" id="2.30.30.280">
    <property type="entry name" value="Adenine nucleotide alpha hydrolases-like domains"/>
    <property type="match status" value="1"/>
</dbReference>
<dbReference type="Gene3D" id="3.40.50.620">
    <property type="entry name" value="HUPs"/>
    <property type="match status" value="1"/>
</dbReference>
<dbReference type="Gene3D" id="2.40.30.10">
    <property type="entry name" value="Translation factors"/>
    <property type="match status" value="1"/>
</dbReference>
<dbReference type="HAMAP" id="MF_00144">
    <property type="entry name" value="tRNA_thiouridyl_MnmA"/>
    <property type="match status" value="1"/>
</dbReference>
<dbReference type="InterPro" id="IPR004506">
    <property type="entry name" value="MnmA-like"/>
</dbReference>
<dbReference type="InterPro" id="IPR046885">
    <property type="entry name" value="MnmA-like_C"/>
</dbReference>
<dbReference type="InterPro" id="IPR046884">
    <property type="entry name" value="MnmA-like_central"/>
</dbReference>
<dbReference type="InterPro" id="IPR023382">
    <property type="entry name" value="MnmA-like_central_sf"/>
</dbReference>
<dbReference type="InterPro" id="IPR014729">
    <property type="entry name" value="Rossmann-like_a/b/a_fold"/>
</dbReference>
<dbReference type="NCBIfam" id="NF001138">
    <property type="entry name" value="PRK00143.1"/>
    <property type="match status" value="1"/>
</dbReference>
<dbReference type="NCBIfam" id="TIGR00420">
    <property type="entry name" value="trmU"/>
    <property type="match status" value="1"/>
</dbReference>
<dbReference type="PANTHER" id="PTHR11933:SF5">
    <property type="entry name" value="MITOCHONDRIAL TRNA-SPECIFIC 2-THIOURIDYLASE 1"/>
    <property type="match status" value="1"/>
</dbReference>
<dbReference type="PANTHER" id="PTHR11933">
    <property type="entry name" value="TRNA 5-METHYLAMINOMETHYL-2-THIOURIDYLATE -METHYLTRANSFERASE"/>
    <property type="match status" value="1"/>
</dbReference>
<dbReference type="Pfam" id="PF03054">
    <property type="entry name" value="tRNA_Me_trans"/>
    <property type="match status" value="1"/>
</dbReference>
<dbReference type="Pfam" id="PF20258">
    <property type="entry name" value="tRNA_Me_trans_C"/>
    <property type="match status" value="1"/>
</dbReference>
<dbReference type="Pfam" id="PF20259">
    <property type="entry name" value="tRNA_Me_trans_M"/>
    <property type="match status" value="1"/>
</dbReference>
<dbReference type="SUPFAM" id="SSF52402">
    <property type="entry name" value="Adenine nucleotide alpha hydrolases-like"/>
    <property type="match status" value="1"/>
</dbReference>
<accession>A8FUG9</accession>
<sequence>MALIEPTAINNKKVIVGMSGGVDSSVSAYLLLKQGYQVEGLFMKNWEEDDTDEYCAAADDLKDAQAVCDKLGIKLHTVNFASEYWDNVFEYFLAEYKAGRTPNPDIICNKEIKFKAFLEFADDILDADYIAMGHYVRRSDESGQSQMLRGRDGNKDQSYFLYTLSHEQISRSLFPVGELEKSEVREIAKEMGLVTHDKKDSTGICFIGERKFTDFLSTFLPAQPGNIETAEGEIIGKHQGLMYHTLGQRKGLGIGGMKNSNDDPWYVVDKEMDRNVLVVGQGGHHPRLMSVGFYADQLHWVDRKGPIDGAQITVKTRYRQRDVACTLTYEGDDRIKVIFDEPVAAVTPGQSAVFYDAELCLGGGIIDSLIRE</sequence>
<proteinExistence type="inferred from homology"/>
<keyword id="KW-0067">ATP-binding</keyword>
<keyword id="KW-0963">Cytoplasm</keyword>
<keyword id="KW-1015">Disulfide bond</keyword>
<keyword id="KW-0547">Nucleotide-binding</keyword>
<keyword id="KW-1185">Reference proteome</keyword>
<keyword id="KW-0694">RNA-binding</keyword>
<keyword id="KW-0808">Transferase</keyword>
<keyword id="KW-0819">tRNA processing</keyword>
<keyword id="KW-0820">tRNA-binding</keyword>
<name>MNMA_SHESH</name>
<organism>
    <name type="scientific">Shewanella sediminis (strain HAW-EB3)</name>
    <dbReference type="NCBI Taxonomy" id="425104"/>
    <lineage>
        <taxon>Bacteria</taxon>
        <taxon>Pseudomonadati</taxon>
        <taxon>Pseudomonadota</taxon>
        <taxon>Gammaproteobacteria</taxon>
        <taxon>Alteromonadales</taxon>
        <taxon>Shewanellaceae</taxon>
        <taxon>Shewanella</taxon>
    </lineage>
</organism>